<keyword id="KW-0687">Ribonucleoprotein</keyword>
<keyword id="KW-0689">Ribosomal protein</keyword>
<keyword id="KW-0694">RNA-binding</keyword>
<keyword id="KW-0699">rRNA-binding</keyword>
<name>RL24_RHOJR</name>
<dbReference type="EMBL" id="CP000431">
    <property type="protein sequence ID" value="ABG97921.1"/>
    <property type="molecule type" value="Genomic_DNA"/>
</dbReference>
<dbReference type="RefSeq" id="WP_005239640.1">
    <property type="nucleotide sequence ID" value="NC_008268.1"/>
</dbReference>
<dbReference type="SMR" id="Q0S3G5"/>
<dbReference type="GeneID" id="69890527"/>
<dbReference type="KEGG" id="rha:RHA1_ro06144"/>
<dbReference type="eggNOG" id="COG0198">
    <property type="taxonomic scope" value="Bacteria"/>
</dbReference>
<dbReference type="HOGENOM" id="CLU_093315_2_0_11"/>
<dbReference type="OrthoDB" id="9807419at2"/>
<dbReference type="Proteomes" id="UP000008710">
    <property type="component" value="Chromosome"/>
</dbReference>
<dbReference type="GO" id="GO:1990904">
    <property type="term" value="C:ribonucleoprotein complex"/>
    <property type="evidence" value="ECO:0007669"/>
    <property type="project" value="UniProtKB-KW"/>
</dbReference>
<dbReference type="GO" id="GO:0005840">
    <property type="term" value="C:ribosome"/>
    <property type="evidence" value="ECO:0007669"/>
    <property type="project" value="UniProtKB-KW"/>
</dbReference>
<dbReference type="GO" id="GO:0019843">
    <property type="term" value="F:rRNA binding"/>
    <property type="evidence" value="ECO:0007669"/>
    <property type="project" value="UniProtKB-UniRule"/>
</dbReference>
<dbReference type="GO" id="GO:0003735">
    <property type="term" value="F:structural constituent of ribosome"/>
    <property type="evidence" value="ECO:0007669"/>
    <property type="project" value="InterPro"/>
</dbReference>
<dbReference type="GO" id="GO:0006412">
    <property type="term" value="P:translation"/>
    <property type="evidence" value="ECO:0007669"/>
    <property type="project" value="UniProtKB-UniRule"/>
</dbReference>
<dbReference type="CDD" id="cd06089">
    <property type="entry name" value="KOW_RPL26"/>
    <property type="match status" value="1"/>
</dbReference>
<dbReference type="FunFam" id="2.30.30.30:FF:000004">
    <property type="entry name" value="50S ribosomal protein L24"/>
    <property type="match status" value="1"/>
</dbReference>
<dbReference type="Gene3D" id="2.30.30.30">
    <property type="match status" value="1"/>
</dbReference>
<dbReference type="HAMAP" id="MF_01326_B">
    <property type="entry name" value="Ribosomal_uL24_B"/>
    <property type="match status" value="1"/>
</dbReference>
<dbReference type="InterPro" id="IPR005824">
    <property type="entry name" value="KOW"/>
</dbReference>
<dbReference type="InterPro" id="IPR014722">
    <property type="entry name" value="Rib_uL2_dom2"/>
</dbReference>
<dbReference type="InterPro" id="IPR003256">
    <property type="entry name" value="Ribosomal_uL24"/>
</dbReference>
<dbReference type="InterPro" id="IPR005825">
    <property type="entry name" value="Ribosomal_uL24_CS"/>
</dbReference>
<dbReference type="InterPro" id="IPR041988">
    <property type="entry name" value="Ribosomal_uL24_KOW"/>
</dbReference>
<dbReference type="InterPro" id="IPR008991">
    <property type="entry name" value="Translation_prot_SH3-like_sf"/>
</dbReference>
<dbReference type="NCBIfam" id="TIGR01079">
    <property type="entry name" value="rplX_bact"/>
    <property type="match status" value="1"/>
</dbReference>
<dbReference type="PANTHER" id="PTHR12903">
    <property type="entry name" value="MITOCHONDRIAL RIBOSOMAL PROTEIN L24"/>
    <property type="match status" value="1"/>
</dbReference>
<dbReference type="Pfam" id="PF00467">
    <property type="entry name" value="KOW"/>
    <property type="match status" value="1"/>
</dbReference>
<dbReference type="Pfam" id="PF17136">
    <property type="entry name" value="ribosomal_L24"/>
    <property type="match status" value="1"/>
</dbReference>
<dbReference type="SMART" id="SM00739">
    <property type="entry name" value="KOW"/>
    <property type="match status" value="1"/>
</dbReference>
<dbReference type="SUPFAM" id="SSF50104">
    <property type="entry name" value="Translation proteins SH3-like domain"/>
    <property type="match status" value="1"/>
</dbReference>
<dbReference type="PROSITE" id="PS01108">
    <property type="entry name" value="RIBOSOMAL_L24"/>
    <property type="match status" value="1"/>
</dbReference>
<reference key="1">
    <citation type="journal article" date="2006" name="Proc. Natl. Acad. Sci. U.S.A.">
        <title>The complete genome of Rhodococcus sp. RHA1 provides insights into a catabolic powerhouse.</title>
        <authorList>
            <person name="McLeod M.P."/>
            <person name="Warren R.L."/>
            <person name="Hsiao W.W.L."/>
            <person name="Araki N."/>
            <person name="Myhre M."/>
            <person name="Fernandes C."/>
            <person name="Miyazawa D."/>
            <person name="Wong W."/>
            <person name="Lillquist A.L."/>
            <person name="Wang D."/>
            <person name="Dosanjh M."/>
            <person name="Hara H."/>
            <person name="Petrescu A."/>
            <person name="Morin R.D."/>
            <person name="Yang G."/>
            <person name="Stott J.M."/>
            <person name="Schein J.E."/>
            <person name="Shin H."/>
            <person name="Smailus D."/>
            <person name="Siddiqui A.S."/>
            <person name="Marra M.A."/>
            <person name="Jones S.J.M."/>
            <person name="Holt R."/>
            <person name="Brinkman F.S.L."/>
            <person name="Miyauchi K."/>
            <person name="Fukuda M."/>
            <person name="Davies J.E."/>
            <person name="Mohn W.W."/>
            <person name="Eltis L.D."/>
        </authorList>
    </citation>
    <scope>NUCLEOTIDE SEQUENCE [LARGE SCALE GENOMIC DNA]</scope>
    <source>
        <strain>RHA1</strain>
    </source>
</reference>
<proteinExistence type="inferred from homology"/>
<organism>
    <name type="scientific">Rhodococcus jostii (strain RHA1)</name>
    <dbReference type="NCBI Taxonomy" id="101510"/>
    <lineage>
        <taxon>Bacteria</taxon>
        <taxon>Bacillati</taxon>
        <taxon>Actinomycetota</taxon>
        <taxon>Actinomycetes</taxon>
        <taxon>Mycobacteriales</taxon>
        <taxon>Nocardiaceae</taxon>
        <taxon>Rhodococcus</taxon>
    </lineage>
</organism>
<protein>
    <recommendedName>
        <fullName evidence="1">Large ribosomal subunit protein uL24</fullName>
    </recommendedName>
    <alternativeName>
        <fullName evidence="3">50S ribosomal protein L24</fullName>
    </alternativeName>
</protein>
<feature type="chain" id="PRO_1000052294" description="Large ribosomal subunit protein uL24">
    <location>
        <begin position="1"/>
        <end position="105"/>
    </location>
</feature>
<feature type="region of interest" description="Disordered" evidence="2">
    <location>
        <begin position="75"/>
        <end position="105"/>
    </location>
</feature>
<feature type="compositionally biased region" description="Basic residues" evidence="2">
    <location>
        <begin position="94"/>
        <end position="105"/>
    </location>
</feature>
<sequence length="105" mass="11133">MKVHKGDTVLVIAGKDKGAKGKVIQAYPATNKVLVEGVNRIKKHTAVSANERGASSGGIVTQEAPIHVSNVAVVDSDGNPTRVGYRTDEESGKRVRISRKNGKDI</sequence>
<gene>
    <name evidence="1" type="primary">rplX</name>
    <name type="ordered locus">RHA1_ro06144</name>
</gene>
<evidence type="ECO:0000255" key="1">
    <source>
        <dbReference type="HAMAP-Rule" id="MF_01326"/>
    </source>
</evidence>
<evidence type="ECO:0000256" key="2">
    <source>
        <dbReference type="SAM" id="MobiDB-lite"/>
    </source>
</evidence>
<evidence type="ECO:0000305" key="3"/>
<accession>Q0S3G5</accession>
<comment type="function">
    <text evidence="1">One of two assembly initiator proteins, it binds directly to the 5'-end of the 23S rRNA, where it nucleates assembly of the 50S subunit.</text>
</comment>
<comment type="function">
    <text evidence="1">One of the proteins that surrounds the polypeptide exit tunnel on the outside of the subunit.</text>
</comment>
<comment type="subunit">
    <text evidence="1">Part of the 50S ribosomal subunit.</text>
</comment>
<comment type="similarity">
    <text evidence="1">Belongs to the universal ribosomal protein uL24 family.</text>
</comment>